<organism>
    <name type="scientific">Staphylococcus aureus (strain MSSA476)</name>
    <dbReference type="NCBI Taxonomy" id="282459"/>
    <lineage>
        <taxon>Bacteria</taxon>
        <taxon>Bacillati</taxon>
        <taxon>Bacillota</taxon>
        <taxon>Bacilli</taxon>
        <taxon>Bacillales</taxon>
        <taxon>Staphylococcaceae</taxon>
        <taxon>Staphylococcus</taxon>
    </lineage>
</organism>
<keyword id="KW-0275">Fatty acid biosynthesis</keyword>
<keyword id="KW-0276">Fatty acid metabolism</keyword>
<keyword id="KW-0444">Lipid biosynthesis</keyword>
<keyword id="KW-0443">Lipid metabolism</keyword>
<keyword id="KW-0521">NADP</keyword>
<keyword id="KW-0560">Oxidoreductase</keyword>
<name>FABG_STAAS</name>
<reference key="1">
    <citation type="journal article" date="2004" name="Proc. Natl. Acad. Sci. U.S.A.">
        <title>Complete genomes of two clinical Staphylococcus aureus strains: evidence for the rapid evolution of virulence and drug resistance.</title>
        <authorList>
            <person name="Holden M.T.G."/>
            <person name="Feil E.J."/>
            <person name="Lindsay J.A."/>
            <person name="Peacock S.J."/>
            <person name="Day N.P.J."/>
            <person name="Enright M.C."/>
            <person name="Foster T.J."/>
            <person name="Moore C.E."/>
            <person name="Hurst L."/>
            <person name="Atkin R."/>
            <person name="Barron A."/>
            <person name="Bason N."/>
            <person name="Bentley S.D."/>
            <person name="Chillingworth C."/>
            <person name="Chillingworth T."/>
            <person name="Churcher C."/>
            <person name="Clark L."/>
            <person name="Corton C."/>
            <person name="Cronin A."/>
            <person name="Doggett J."/>
            <person name="Dowd L."/>
            <person name="Feltwell T."/>
            <person name="Hance Z."/>
            <person name="Harris B."/>
            <person name="Hauser H."/>
            <person name="Holroyd S."/>
            <person name="Jagels K."/>
            <person name="James K.D."/>
            <person name="Lennard N."/>
            <person name="Line A."/>
            <person name="Mayes R."/>
            <person name="Moule S."/>
            <person name="Mungall K."/>
            <person name="Ormond D."/>
            <person name="Quail M.A."/>
            <person name="Rabbinowitsch E."/>
            <person name="Rutherford K.M."/>
            <person name="Sanders M."/>
            <person name="Sharp S."/>
            <person name="Simmonds M."/>
            <person name="Stevens K."/>
            <person name="Whitehead S."/>
            <person name="Barrell B.G."/>
            <person name="Spratt B.G."/>
            <person name="Parkhill J."/>
        </authorList>
    </citation>
    <scope>NUCLEOTIDE SEQUENCE [LARGE SCALE GENOMIC DNA]</scope>
    <source>
        <strain>MSSA476</strain>
    </source>
</reference>
<dbReference type="EC" id="1.1.1.100"/>
<dbReference type="EMBL" id="BX571857">
    <property type="protein sequence ID" value="CAG42942.1"/>
    <property type="molecule type" value="Genomic_DNA"/>
</dbReference>
<dbReference type="SMR" id="Q6G9Y2"/>
<dbReference type="KEGG" id="sas:SAS1165"/>
<dbReference type="HOGENOM" id="CLU_010194_1_3_9"/>
<dbReference type="UniPathway" id="UPA00094"/>
<dbReference type="GO" id="GO:0004316">
    <property type="term" value="F:3-oxoacyl-[acyl-carrier-protein] reductase (NADPH) activity"/>
    <property type="evidence" value="ECO:0000250"/>
    <property type="project" value="UniProtKB"/>
</dbReference>
<dbReference type="GO" id="GO:0051287">
    <property type="term" value="F:NAD binding"/>
    <property type="evidence" value="ECO:0007669"/>
    <property type="project" value="InterPro"/>
</dbReference>
<dbReference type="GO" id="GO:0050661">
    <property type="term" value="F:NADP binding"/>
    <property type="evidence" value="ECO:0000250"/>
    <property type="project" value="UniProtKB"/>
</dbReference>
<dbReference type="GO" id="GO:0030497">
    <property type="term" value="P:fatty acid elongation"/>
    <property type="evidence" value="ECO:0000250"/>
    <property type="project" value="UniProtKB"/>
</dbReference>
<dbReference type="CDD" id="cd05333">
    <property type="entry name" value="BKR_SDR_c"/>
    <property type="match status" value="1"/>
</dbReference>
<dbReference type="FunFam" id="3.40.50.720:FF:000037">
    <property type="entry name" value="3-oxoacyl-[acyl-carrier-protein] reductase FabG"/>
    <property type="match status" value="1"/>
</dbReference>
<dbReference type="Gene3D" id="3.40.50.720">
    <property type="entry name" value="NAD(P)-binding Rossmann-like Domain"/>
    <property type="match status" value="1"/>
</dbReference>
<dbReference type="InterPro" id="IPR011284">
    <property type="entry name" value="3oxo_ACP_reduc"/>
</dbReference>
<dbReference type="InterPro" id="IPR036291">
    <property type="entry name" value="NAD(P)-bd_dom_sf"/>
</dbReference>
<dbReference type="InterPro" id="IPR020904">
    <property type="entry name" value="Sc_DH/Rdtase_CS"/>
</dbReference>
<dbReference type="InterPro" id="IPR050259">
    <property type="entry name" value="SDR"/>
</dbReference>
<dbReference type="InterPro" id="IPR002347">
    <property type="entry name" value="SDR_fam"/>
</dbReference>
<dbReference type="NCBIfam" id="TIGR01830">
    <property type="entry name" value="3oxo_ACP_reduc"/>
    <property type="match status" value="1"/>
</dbReference>
<dbReference type="NCBIfam" id="NF004197">
    <property type="entry name" value="PRK05653.1-1"/>
    <property type="match status" value="1"/>
</dbReference>
<dbReference type="NCBIfam" id="NF004198">
    <property type="entry name" value="PRK05653.1-3"/>
    <property type="match status" value="1"/>
</dbReference>
<dbReference type="NCBIfam" id="NF004199">
    <property type="entry name" value="PRK05653.1-4"/>
    <property type="match status" value="1"/>
</dbReference>
<dbReference type="NCBIfam" id="NF004200">
    <property type="entry name" value="PRK05653.1-5"/>
    <property type="match status" value="1"/>
</dbReference>
<dbReference type="NCBIfam" id="NF005559">
    <property type="entry name" value="PRK07231.1"/>
    <property type="match status" value="1"/>
</dbReference>
<dbReference type="NCBIfam" id="NF009466">
    <property type="entry name" value="PRK12826.1-2"/>
    <property type="match status" value="1"/>
</dbReference>
<dbReference type="PANTHER" id="PTHR42879">
    <property type="entry name" value="3-OXOACYL-(ACYL-CARRIER-PROTEIN) REDUCTASE"/>
    <property type="match status" value="1"/>
</dbReference>
<dbReference type="PANTHER" id="PTHR42879:SF2">
    <property type="entry name" value="3-OXOACYL-[ACYL-CARRIER-PROTEIN] REDUCTASE FABG"/>
    <property type="match status" value="1"/>
</dbReference>
<dbReference type="Pfam" id="PF13561">
    <property type="entry name" value="adh_short_C2"/>
    <property type="match status" value="1"/>
</dbReference>
<dbReference type="PRINTS" id="PR00081">
    <property type="entry name" value="GDHRDH"/>
</dbReference>
<dbReference type="PRINTS" id="PR00080">
    <property type="entry name" value="SDRFAMILY"/>
</dbReference>
<dbReference type="SMART" id="SM00822">
    <property type="entry name" value="PKS_KR"/>
    <property type="match status" value="1"/>
</dbReference>
<dbReference type="SUPFAM" id="SSF51735">
    <property type="entry name" value="NAD(P)-binding Rossmann-fold domains"/>
    <property type="match status" value="1"/>
</dbReference>
<dbReference type="PROSITE" id="PS00061">
    <property type="entry name" value="ADH_SHORT"/>
    <property type="match status" value="1"/>
</dbReference>
<protein>
    <recommendedName>
        <fullName>3-oxoacyl-[acyl-carrier-protein] reductase FabG</fullName>
        <ecNumber>1.1.1.100</ecNumber>
    </recommendedName>
    <alternativeName>
        <fullName>3-ketoacyl-acyl carrier protein reductase</fullName>
    </alternativeName>
    <alternativeName>
        <fullName>Beta-Ketoacyl-acyl carrier protein reductase</fullName>
    </alternativeName>
    <alternativeName>
        <fullName>Beta-ketoacyl-ACP reductase</fullName>
    </alternativeName>
</protein>
<proteinExistence type="inferred from homology"/>
<evidence type="ECO:0000250" key="1"/>
<evidence type="ECO:0000255" key="2">
    <source>
        <dbReference type="PROSITE-ProRule" id="PRU10001"/>
    </source>
</evidence>
<evidence type="ECO:0000305" key="3"/>
<sequence length="246" mass="26146">MKMTKSALVTGASRGIGRSIALQLAEEGYNVAVNYAGSKEKAEAVVEEIKAKGVDSFAIQANVADADEVKAMIKEVVSQFGSLDVLVNNAGITRDNLLMRMKEQEWDDVIDTNLKGVFNCIQKATPQMLRQRSGAIINLSSVVGAVGNPGQANYVATKAGVIGLTKSAARELASRGITVNAVAPGFIVSDMTDALSDELKEQMLTQIPLARFGQDTDIANTVAFLASDKAKYITGQTIHVNGGMYM</sequence>
<comment type="function">
    <text evidence="1">Catalyzes the NADPH-dependent reduction of beta-ketoacyl-ACP substrates to beta-hydroxyacyl-ACP products, the first reductive step in the elongation cycle of fatty acid biosynthesis.</text>
</comment>
<comment type="catalytic activity">
    <reaction>
        <text>a (3R)-hydroxyacyl-[ACP] + NADP(+) = a 3-oxoacyl-[ACP] + NADPH + H(+)</text>
        <dbReference type="Rhea" id="RHEA:17397"/>
        <dbReference type="Rhea" id="RHEA-COMP:9916"/>
        <dbReference type="Rhea" id="RHEA-COMP:9945"/>
        <dbReference type="ChEBI" id="CHEBI:15378"/>
        <dbReference type="ChEBI" id="CHEBI:57783"/>
        <dbReference type="ChEBI" id="CHEBI:58349"/>
        <dbReference type="ChEBI" id="CHEBI:78776"/>
        <dbReference type="ChEBI" id="CHEBI:78827"/>
        <dbReference type="EC" id="1.1.1.100"/>
    </reaction>
</comment>
<comment type="pathway">
    <text>Lipid metabolism; fatty acid biosynthesis.</text>
</comment>
<comment type="subunit">
    <text evidence="1">Homotetramer.</text>
</comment>
<comment type="similarity">
    <text evidence="3">Belongs to the short-chain dehydrogenases/reductases (SDR) family.</text>
</comment>
<accession>Q6G9Y2</accession>
<feature type="chain" id="PRO_0000054687" description="3-oxoacyl-[acyl-carrier-protein] reductase FabG">
    <location>
        <begin position="1"/>
        <end position="246"/>
    </location>
</feature>
<feature type="active site" description="Proton acceptor" evidence="2">
    <location>
        <position position="154"/>
    </location>
</feature>
<feature type="binding site" evidence="1">
    <location>
        <begin position="11"/>
        <end position="14"/>
    </location>
    <ligand>
        <name>NADP(+)</name>
        <dbReference type="ChEBI" id="CHEBI:58349"/>
    </ligand>
</feature>
<feature type="binding site" evidence="1">
    <location>
        <begin position="62"/>
        <end position="63"/>
    </location>
    <ligand>
        <name>NADP(+)</name>
        <dbReference type="ChEBI" id="CHEBI:58349"/>
    </ligand>
</feature>
<feature type="binding site" evidence="1">
    <location>
        <position position="89"/>
    </location>
    <ligand>
        <name>NADP(+)</name>
        <dbReference type="ChEBI" id="CHEBI:58349"/>
    </ligand>
</feature>
<feature type="binding site" evidence="1">
    <location>
        <position position="141"/>
    </location>
    <ligand>
        <name>substrate</name>
    </ligand>
</feature>
<feature type="binding site" evidence="1">
    <location>
        <begin position="154"/>
        <end position="158"/>
    </location>
    <ligand>
        <name>NADP(+)</name>
        <dbReference type="ChEBI" id="CHEBI:58349"/>
    </ligand>
</feature>
<feature type="binding site" evidence="1">
    <location>
        <position position="187"/>
    </location>
    <ligand>
        <name>NADP(+)</name>
        <dbReference type="ChEBI" id="CHEBI:58349"/>
    </ligand>
</feature>
<gene>
    <name type="primary">fabG</name>
    <name type="ordered locus">SAS1165</name>
</gene>